<dbReference type="EC" id="4.3.2.10" evidence="1"/>
<dbReference type="EC" id="3.5.1.2" evidence="1"/>
<dbReference type="EMBL" id="AE017285">
    <property type="protein sequence ID" value="AAS94768.1"/>
    <property type="molecule type" value="Genomic_DNA"/>
</dbReference>
<dbReference type="RefSeq" id="WP_010937594.1">
    <property type="nucleotide sequence ID" value="NC_002937.3"/>
</dbReference>
<dbReference type="RefSeq" id="YP_009509.1">
    <property type="nucleotide sequence ID" value="NC_002937.3"/>
</dbReference>
<dbReference type="SMR" id="P61779"/>
<dbReference type="IntAct" id="P61779">
    <property type="interactions" value="1"/>
</dbReference>
<dbReference type="STRING" id="882.DVU_0285"/>
<dbReference type="PaxDb" id="882-DVU_0285"/>
<dbReference type="EnsemblBacteria" id="AAS94768">
    <property type="protein sequence ID" value="AAS94768"/>
    <property type="gene ID" value="DVU_0285"/>
</dbReference>
<dbReference type="KEGG" id="dvu:DVU_0285"/>
<dbReference type="PATRIC" id="fig|882.5.peg.272"/>
<dbReference type="eggNOG" id="COG0118">
    <property type="taxonomic scope" value="Bacteria"/>
</dbReference>
<dbReference type="HOGENOM" id="CLU_071837_2_0_7"/>
<dbReference type="OrthoDB" id="9807749at2"/>
<dbReference type="PhylomeDB" id="P61779"/>
<dbReference type="UniPathway" id="UPA00031">
    <property type="reaction ID" value="UER00010"/>
</dbReference>
<dbReference type="Proteomes" id="UP000002194">
    <property type="component" value="Chromosome"/>
</dbReference>
<dbReference type="GO" id="GO:0005737">
    <property type="term" value="C:cytoplasm"/>
    <property type="evidence" value="ECO:0007669"/>
    <property type="project" value="UniProtKB-SubCell"/>
</dbReference>
<dbReference type="GO" id="GO:0004359">
    <property type="term" value="F:glutaminase activity"/>
    <property type="evidence" value="ECO:0007669"/>
    <property type="project" value="UniProtKB-EC"/>
</dbReference>
<dbReference type="GO" id="GO:0000107">
    <property type="term" value="F:imidazoleglycerol-phosphate synthase activity"/>
    <property type="evidence" value="ECO:0007669"/>
    <property type="project" value="UniProtKB-UniRule"/>
</dbReference>
<dbReference type="GO" id="GO:0016829">
    <property type="term" value="F:lyase activity"/>
    <property type="evidence" value="ECO:0007669"/>
    <property type="project" value="UniProtKB-KW"/>
</dbReference>
<dbReference type="GO" id="GO:0000105">
    <property type="term" value="P:L-histidine biosynthetic process"/>
    <property type="evidence" value="ECO:0007669"/>
    <property type="project" value="UniProtKB-UniRule"/>
</dbReference>
<dbReference type="CDD" id="cd01748">
    <property type="entry name" value="GATase1_IGP_Synthase"/>
    <property type="match status" value="1"/>
</dbReference>
<dbReference type="Gene3D" id="3.40.50.880">
    <property type="match status" value="1"/>
</dbReference>
<dbReference type="HAMAP" id="MF_00278">
    <property type="entry name" value="HisH"/>
    <property type="match status" value="1"/>
</dbReference>
<dbReference type="InterPro" id="IPR029062">
    <property type="entry name" value="Class_I_gatase-like"/>
</dbReference>
<dbReference type="InterPro" id="IPR017926">
    <property type="entry name" value="GATASE"/>
</dbReference>
<dbReference type="InterPro" id="IPR010139">
    <property type="entry name" value="Imidazole-glycPsynth_HisH"/>
</dbReference>
<dbReference type="NCBIfam" id="TIGR01855">
    <property type="entry name" value="IMP_synth_hisH"/>
    <property type="match status" value="1"/>
</dbReference>
<dbReference type="PANTHER" id="PTHR42701">
    <property type="entry name" value="IMIDAZOLE GLYCEROL PHOSPHATE SYNTHASE SUBUNIT HISH"/>
    <property type="match status" value="1"/>
</dbReference>
<dbReference type="PANTHER" id="PTHR42701:SF1">
    <property type="entry name" value="IMIDAZOLE GLYCEROL PHOSPHATE SYNTHASE SUBUNIT HISH"/>
    <property type="match status" value="1"/>
</dbReference>
<dbReference type="Pfam" id="PF00117">
    <property type="entry name" value="GATase"/>
    <property type="match status" value="1"/>
</dbReference>
<dbReference type="PIRSF" id="PIRSF000495">
    <property type="entry name" value="Amidotransf_hisH"/>
    <property type="match status" value="1"/>
</dbReference>
<dbReference type="SUPFAM" id="SSF52317">
    <property type="entry name" value="Class I glutamine amidotransferase-like"/>
    <property type="match status" value="1"/>
</dbReference>
<dbReference type="PROSITE" id="PS51273">
    <property type="entry name" value="GATASE_TYPE_1"/>
    <property type="match status" value="1"/>
</dbReference>
<gene>
    <name evidence="1" type="primary">hisH</name>
    <name type="ordered locus">DVU_0285</name>
</gene>
<name>HIS5_NITV2</name>
<protein>
    <recommendedName>
        <fullName evidence="1">Imidazole glycerol phosphate synthase subunit HisH</fullName>
        <ecNumber evidence="1">4.3.2.10</ecNumber>
    </recommendedName>
    <alternativeName>
        <fullName evidence="1">IGP synthase glutaminase subunit</fullName>
        <ecNumber evidence="1">3.5.1.2</ecNumber>
    </alternativeName>
    <alternativeName>
        <fullName evidence="1">IGP synthase subunit HisH</fullName>
    </alternativeName>
    <alternativeName>
        <fullName evidence="1">ImGP synthase subunit HisH</fullName>
        <shortName evidence="1">IGPS subunit HisH</shortName>
    </alternativeName>
</protein>
<keyword id="KW-0028">Amino-acid biosynthesis</keyword>
<keyword id="KW-0963">Cytoplasm</keyword>
<keyword id="KW-0315">Glutamine amidotransferase</keyword>
<keyword id="KW-0368">Histidine biosynthesis</keyword>
<keyword id="KW-0378">Hydrolase</keyword>
<keyword id="KW-0456">Lyase</keyword>
<keyword id="KW-1185">Reference proteome</keyword>
<comment type="function">
    <text evidence="1">IGPS catalyzes the conversion of PRFAR and glutamine to IGP, AICAR and glutamate. The HisH subunit catalyzes the hydrolysis of glutamine to glutamate and ammonia as part of the synthesis of IGP and AICAR. The resulting ammonia molecule is channeled to the active site of HisF.</text>
</comment>
<comment type="catalytic activity">
    <reaction evidence="1">
        <text>5-[(5-phospho-1-deoxy-D-ribulos-1-ylimino)methylamino]-1-(5-phospho-beta-D-ribosyl)imidazole-4-carboxamide + L-glutamine = D-erythro-1-(imidazol-4-yl)glycerol 3-phosphate + 5-amino-1-(5-phospho-beta-D-ribosyl)imidazole-4-carboxamide + L-glutamate + H(+)</text>
        <dbReference type="Rhea" id="RHEA:24793"/>
        <dbReference type="ChEBI" id="CHEBI:15378"/>
        <dbReference type="ChEBI" id="CHEBI:29985"/>
        <dbReference type="ChEBI" id="CHEBI:58278"/>
        <dbReference type="ChEBI" id="CHEBI:58359"/>
        <dbReference type="ChEBI" id="CHEBI:58475"/>
        <dbReference type="ChEBI" id="CHEBI:58525"/>
        <dbReference type="EC" id="4.3.2.10"/>
    </reaction>
</comment>
<comment type="catalytic activity">
    <reaction evidence="1">
        <text>L-glutamine + H2O = L-glutamate + NH4(+)</text>
        <dbReference type="Rhea" id="RHEA:15889"/>
        <dbReference type="ChEBI" id="CHEBI:15377"/>
        <dbReference type="ChEBI" id="CHEBI:28938"/>
        <dbReference type="ChEBI" id="CHEBI:29985"/>
        <dbReference type="ChEBI" id="CHEBI:58359"/>
        <dbReference type="EC" id="3.5.1.2"/>
    </reaction>
</comment>
<comment type="pathway">
    <text evidence="1">Amino-acid biosynthesis; L-histidine biosynthesis; L-histidine from 5-phospho-alpha-D-ribose 1-diphosphate: step 5/9.</text>
</comment>
<comment type="subunit">
    <text evidence="1">Heterodimer of HisH and HisF.</text>
</comment>
<comment type="interaction">
    <interactant intactId="EBI-10064985">
        <id>P61779</id>
    </interactant>
    <interactant intactId="EBI-10064978">
        <id>P62450</id>
        <label>hisF</label>
    </interactant>
    <organismsDiffer>false</organismsDiffer>
    <experiments>3</experiments>
</comment>
<comment type="subcellular location">
    <subcellularLocation>
        <location evidence="1">Cytoplasm</location>
    </subcellularLocation>
</comment>
<proteinExistence type="evidence at protein level"/>
<sequence length="213" mass="23259">MLAILDYKAGNQTSVRRALDHLGIPCVITADPEVIQGAAGVIFPGVGAAGQAMNELVTTGLDEVLRRQVQAGRPLLGICVGCQIMLDYSQENDTKALGIIPGECRLFNPAWTDEDGAPIRVPHMGWNHIVQRRPCELLKGIEPEAEFYFVHSYYPAPPEEYVIATCTYGAEFCAIHGGPGLWAVQFHPEKSGRPGLRLLANFHRYCTEAADAQ</sequence>
<evidence type="ECO:0000255" key="1">
    <source>
        <dbReference type="HAMAP-Rule" id="MF_00278"/>
    </source>
</evidence>
<organism>
    <name type="scientific">Nitratidesulfovibrio vulgaris (strain ATCC 29579 / DSM 644 / CCUG 34227 / NCIMB 8303 / VKM B-1760 / Hildenborough)</name>
    <name type="common">Desulfovibrio vulgaris</name>
    <dbReference type="NCBI Taxonomy" id="882"/>
    <lineage>
        <taxon>Bacteria</taxon>
        <taxon>Pseudomonadati</taxon>
        <taxon>Thermodesulfobacteriota</taxon>
        <taxon>Desulfovibrionia</taxon>
        <taxon>Desulfovibrionales</taxon>
        <taxon>Desulfovibrionaceae</taxon>
        <taxon>Nitratidesulfovibrio</taxon>
    </lineage>
</organism>
<reference key="1">
    <citation type="journal article" date="2004" name="Nat. Biotechnol.">
        <title>The genome sequence of the anaerobic, sulfate-reducing bacterium Desulfovibrio vulgaris Hildenborough.</title>
        <authorList>
            <person name="Heidelberg J.F."/>
            <person name="Seshadri R."/>
            <person name="Haveman S.A."/>
            <person name="Hemme C.L."/>
            <person name="Paulsen I.T."/>
            <person name="Kolonay J.F."/>
            <person name="Eisen J.A."/>
            <person name="Ward N.L."/>
            <person name="Methe B.A."/>
            <person name="Brinkac L.M."/>
            <person name="Daugherty S.C."/>
            <person name="DeBoy R.T."/>
            <person name="Dodson R.J."/>
            <person name="Durkin A.S."/>
            <person name="Madupu R."/>
            <person name="Nelson W.C."/>
            <person name="Sullivan S.A."/>
            <person name="Fouts D.E."/>
            <person name="Haft D.H."/>
            <person name="Selengut J."/>
            <person name="Peterson J.D."/>
            <person name="Davidsen T.M."/>
            <person name="Zafar N."/>
            <person name="Zhou L."/>
            <person name="Radune D."/>
            <person name="Dimitrov G."/>
            <person name="Hance M."/>
            <person name="Tran K."/>
            <person name="Khouri H.M."/>
            <person name="Gill J."/>
            <person name="Utterback T.R."/>
            <person name="Feldblyum T.V."/>
            <person name="Wall J.D."/>
            <person name="Voordouw G."/>
            <person name="Fraser C.M."/>
        </authorList>
    </citation>
    <scope>NUCLEOTIDE SEQUENCE [LARGE SCALE GENOMIC DNA]</scope>
    <source>
        <strain>ATCC 29579 / DSM 644 / CCUG 34227 / NCIMB 8303 / VKM B-1760 / Hildenborough</strain>
    </source>
</reference>
<feature type="chain" id="PRO_0000152372" description="Imidazole glycerol phosphate synthase subunit HisH">
    <location>
        <begin position="1"/>
        <end position="213"/>
    </location>
</feature>
<feature type="domain" description="Glutamine amidotransferase type-1" evidence="1">
    <location>
        <begin position="1"/>
        <end position="212"/>
    </location>
</feature>
<feature type="active site" description="Nucleophile" evidence="1">
    <location>
        <position position="79"/>
    </location>
</feature>
<feature type="active site" evidence="1">
    <location>
        <position position="187"/>
    </location>
</feature>
<feature type="active site" evidence="1">
    <location>
        <position position="189"/>
    </location>
</feature>
<accession>P61779</accession>